<reference key="1">
    <citation type="journal article" date="1996" name="Proc. Natl. Acad. Sci. U.S.A.">
        <title>Cloning and characterization of a specific coactivator, ARA70, for the androgen receptor in human prostate cells.</title>
        <authorList>
            <person name="Yeh S."/>
            <person name="Chang C."/>
        </authorList>
    </citation>
    <scope>NUCLEOTIDE SEQUENCE [MRNA]</scope>
    <scope>FUNCTION</scope>
    <scope>INTERACTION WITH AR</scope>
    <source>
        <tissue>Prostatic carcinoma</tissue>
    </source>
</reference>
<reference key="2">
    <citation type="journal article" date="1994" name="Oncogene">
        <title>Molecular characterization of RET/PTC3; a novel rearranged version of the RETproto-oncogene in a human thyroid papillary carcinoma.</title>
        <authorList>
            <person name="Santoro M."/>
            <person name="Dathan N.A."/>
            <person name="Berlingieri M.T."/>
            <person name="Bongarzone I."/>
            <person name="Paulin C."/>
            <person name="Grieco M."/>
            <person name="Pierotti M.A."/>
            <person name="Vecchio G."/>
            <person name="Fusco A."/>
        </authorList>
    </citation>
    <scope>NUCLEOTIDE SEQUENCE [MRNA]</scope>
    <scope>CHROMOSOMAL REARRANGEMENT WITH RET</scope>
    <source>
        <tissue>Thyroid</tissue>
    </source>
</reference>
<reference key="3">
    <citation type="journal article" date="2004" name="Nat. Genet.">
        <title>Complete sequencing and characterization of 21,243 full-length human cDNAs.</title>
        <authorList>
            <person name="Ota T."/>
            <person name="Suzuki Y."/>
            <person name="Nishikawa T."/>
            <person name="Otsuki T."/>
            <person name="Sugiyama T."/>
            <person name="Irie R."/>
            <person name="Wakamatsu A."/>
            <person name="Hayashi K."/>
            <person name="Sato H."/>
            <person name="Nagai K."/>
            <person name="Kimura K."/>
            <person name="Makita H."/>
            <person name="Sekine M."/>
            <person name="Obayashi M."/>
            <person name="Nishi T."/>
            <person name="Shibahara T."/>
            <person name="Tanaka T."/>
            <person name="Ishii S."/>
            <person name="Yamamoto J."/>
            <person name="Saito K."/>
            <person name="Kawai Y."/>
            <person name="Isono Y."/>
            <person name="Nakamura Y."/>
            <person name="Nagahari K."/>
            <person name="Murakami K."/>
            <person name="Yasuda T."/>
            <person name="Iwayanagi T."/>
            <person name="Wagatsuma M."/>
            <person name="Shiratori A."/>
            <person name="Sudo H."/>
            <person name="Hosoiri T."/>
            <person name="Kaku Y."/>
            <person name="Kodaira H."/>
            <person name="Kondo H."/>
            <person name="Sugawara M."/>
            <person name="Takahashi M."/>
            <person name="Kanda K."/>
            <person name="Yokoi T."/>
            <person name="Furuya T."/>
            <person name="Kikkawa E."/>
            <person name="Omura Y."/>
            <person name="Abe K."/>
            <person name="Kamihara K."/>
            <person name="Katsuta N."/>
            <person name="Sato K."/>
            <person name="Tanikawa M."/>
            <person name="Yamazaki M."/>
            <person name="Ninomiya K."/>
            <person name="Ishibashi T."/>
            <person name="Yamashita H."/>
            <person name="Murakawa K."/>
            <person name="Fujimori K."/>
            <person name="Tanai H."/>
            <person name="Kimata M."/>
            <person name="Watanabe M."/>
            <person name="Hiraoka S."/>
            <person name="Chiba Y."/>
            <person name="Ishida S."/>
            <person name="Ono Y."/>
            <person name="Takiguchi S."/>
            <person name="Watanabe S."/>
            <person name="Yosida M."/>
            <person name="Hotuta T."/>
            <person name="Kusano J."/>
            <person name="Kanehori K."/>
            <person name="Takahashi-Fujii A."/>
            <person name="Hara H."/>
            <person name="Tanase T.-O."/>
            <person name="Nomura Y."/>
            <person name="Togiya S."/>
            <person name="Komai F."/>
            <person name="Hara R."/>
            <person name="Takeuchi K."/>
            <person name="Arita M."/>
            <person name="Imose N."/>
            <person name="Musashino K."/>
            <person name="Yuuki H."/>
            <person name="Oshima A."/>
            <person name="Sasaki N."/>
            <person name="Aotsuka S."/>
            <person name="Yoshikawa Y."/>
            <person name="Matsunawa H."/>
            <person name="Ichihara T."/>
            <person name="Shiohata N."/>
            <person name="Sano S."/>
            <person name="Moriya S."/>
            <person name="Momiyama H."/>
            <person name="Satoh N."/>
            <person name="Takami S."/>
            <person name="Terashima Y."/>
            <person name="Suzuki O."/>
            <person name="Nakagawa S."/>
            <person name="Senoh A."/>
            <person name="Mizoguchi H."/>
            <person name="Goto Y."/>
            <person name="Shimizu F."/>
            <person name="Wakebe H."/>
            <person name="Hishigaki H."/>
            <person name="Watanabe T."/>
            <person name="Sugiyama A."/>
            <person name="Takemoto M."/>
            <person name="Kawakami B."/>
            <person name="Yamazaki M."/>
            <person name="Watanabe K."/>
            <person name="Kumagai A."/>
            <person name="Itakura S."/>
            <person name="Fukuzumi Y."/>
            <person name="Fujimori Y."/>
            <person name="Komiyama M."/>
            <person name="Tashiro H."/>
            <person name="Tanigami A."/>
            <person name="Fujiwara T."/>
            <person name="Ono T."/>
            <person name="Yamada K."/>
            <person name="Fujii Y."/>
            <person name="Ozaki K."/>
            <person name="Hirao M."/>
            <person name="Ohmori Y."/>
            <person name="Kawabata A."/>
            <person name="Hikiji T."/>
            <person name="Kobatake N."/>
            <person name="Inagaki H."/>
            <person name="Ikema Y."/>
            <person name="Okamoto S."/>
            <person name="Okitani R."/>
            <person name="Kawakami T."/>
            <person name="Noguchi S."/>
            <person name="Itoh T."/>
            <person name="Shigeta K."/>
            <person name="Senba T."/>
            <person name="Matsumura K."/>
            <person name="Nakajima Y."/>
            <person name="Mizuno T."/>
            <person name="Morinaga M."/>
            <person name="Sasaki M."/>
            <person name="Togashi T."/>
            <person name="Oyama M."/>
            <person name="Hata H."/>
            <person name="Watanabe M."/>
            <person name="Komatsu T."/>
            <person name="Mizushima-Sugano J."/>
            <person name="Satoh T."/>
            <person name="Shirai Y."/>
            <person name="Takahashi Y."/>
            <person name="Nakagawa K."/>
            <person name="Okumura K."/>
            <person name="Nagase T."/>
            <person name="Nomura N."/>
            <person name="Kikuchi H."/>
            <person name="Masuho Y."/>
            <person name="Yamashita R."/>
            <person name="Nakai K."/>
            <person name="Yada T."/>
            <person name="Nakamura Y."/>
            <person name="Ohara O."/>
            <person name="Isogai T."/>
            <person name="Sugano S."/>
        </authorList>
    </citation>
    <scope>NUCLEOTIDE SEQUENCE [LARGE SCALE MRNA] (ISOFORMS ALPHA; 3 AND 4)</scope>
    <source>
        <tissue>Testis</tissue>
        <tissue>Trachea</tissue>
    </source>
</reference>
<reference key="4">
    <citation type="journal article" date="2007" name="BMC Genomics">
        <title>The full-ORF clone resource of the German cDNA consortium.</title>
        <authorList>
            <person name="Bechtel S."/>
            <person name="Rosenfelder H."/>
            <person name="Duda A."/>
            <person name="Schmidt C.P."/>
            <person name="Ernst U."/>
            <person name="Wellenreuther R."/>
            <person name="Mehrle A."/>
            <person name="Schuster C."/>
            <person name="Bahr A."/>
            <person name="Bloecker H."/>
            <person name="Heubner D."/>
            <person name="Hoerlein A."/>
            <person name="Michel G."/>
            <person name="Wedler H."/>
            <person name="Koehrer K."/>
            <person name="Ottenwaelder B."/>
            <person name="Poustka A."/>
            <person name="Wiemann S."/>
            <person name="Schupp I."/>
        </authorList>
    </citation>
    <scope>NUCLEOTIDE SEQUENCE [LARGE SCALE MRNA]</scope>
    <source>
        <tissue>Melanoma</tissue>
    </source>
</reference>
<reference key="5">
    <citation type="journal article" date="2004" name="Nature">
        <title>The DNA sequence and comparative analysis of human chromosome 10.</title>
        <authorList>
            <person name="Deloukas P."/>
            <person name="Earthrowl M.E."/>
            <person name="Grafham D.V."/>
            <person name="Rubenfield M."/>
            <person name="French L."/>
            <person name="Steward C.A."/>
            <person name="Sims S.K."/>
            <person name="Jones M.C."/>
            <person name="Searle S."/>
            <person name="Scott C."/>
            <person name="Howe K."/>
            <person name="Hunt S.E."/>
            <person name="Andrews T.D."/>
            <person name="Gilbert J.G.R."/>
            <person name="Swarbreck D."/>
            <person name="Ashurst J.L."/>
            <person name="Taylor A."/>
            <person name="Battles J."/>
            <person name="Bird C.P."/>
            <person name="Ainscough R."/>
            <person name="Almeida J.P."/>
            <person name="Ashwell R.I.S."/>
            <person name="Ambrose K.D."/>
            <person name="Babbage A.K."/>
            <person name="Bagguley C.L."/>
            <person name="Bailey J."/>
            <person name="Banerjee R."/>
            <person name="Bates K."/>
            <person name="Beasley H."/>
            <person name="Bray-Allen S."/>
            <person name="Brown A.J."/>
            <person name="Brown J.Y."/>
            <person name="Burford D.C."/>
            <person name="Burrill W."/>
            <person name="Burton J."/>
            <person name="Cahill P."/>
            <person name="Camire D."/>
            <person name="Carter N.P."/>
            <person name="Chapman J.C."/>
            <person name="Clark S.Y."/>
            <person name="Clarke G."/>
            <person name="Clee C.M."/>
            <person name="Clegg S."/>
            <person name="Corby N."/>
            <person name="Coulson A."/>
            <person name="Dhami P."/>
            <person name="Dutta I."/>
            <person name="Dunn M."/>
            <person name="Faulkner L."/>
            <person name="Frankish A."/>
            <person name="Frankland J.A."/>
            <person name="Garner P."/>
            <person name="Garnett J."/>
            <person name="Gribble S."/>
            <person name="Griffiths C."/>
            <person name="Grocock R."/>
            <person name="Gustafson E."/>
            <person name="Hammond S."/>
            <person name="Harley J.L."/>
            <person name="Hart E."/>
            <person name="Heath P.D."/>
            <person name="Ho T.P."/>
            <person name="Hopkins B."/>
            <person name="Horne J."/>
            <person name="Howden P.J."/>
            <person name="Huckle E."/>
            <person name="Hynds C."/>
            <person name="Johnson C."/>
            <person name="Johnson D."/>
            <person name="Kana A."/>
            <person name="Kay M."/>
            <person name="Kimberley A.M."/>
            <person name="Kershaw J.K."/>
            <person name="Kokkinaki M."/>
            <person name="Laird G.K."/>
            <person name="Lawlor S."/>
            <person name="Lee H.M."/>
            <person name="Leongamornlert D.A."/>
            <person name="Laird G."/>
            <person name="Lloyd C."/>
            <person name="Lloyd D.M."/>
            <person name="Loveland J."/>
            <person name="Lovell J."/>
            <person name="McLaren S."/>
            <person name="McLay K.E."/>
            <person name="McMurray A."/>
            <person name="Mashreghi-Mohammadi M."/>
            <person name="Matthews L."/>
            <person name="Milne S."/>
            <person name="Nickerson T."/>
            <person name="Nguyen M."/>
            <person name="Overton-Larty E."/>
            <person name="Palmer S.A."/>
            <person name="Pearce A.V."/>
            <person name="Peck A.I."/>
            <person name="Pelan S."/>
            <person name="Phillimore B."/>
            <person name="Porter K."/>
            <person name="Rice C.M."/>
            <person name="Rogosin A."/>
            <person name="Ross M.T."/>
            <person name="Sarafidou T."/>
            <person name="Sehra H.K."/>
            <person name="Shownkeen R."/>
            <person name="Skuce C.D."/>
            <person name="Smith M."/>
            <person name="Standring L."/>
            <person name="Sycamore N."/>
            <person name="Tester J."/>
            <person name="Thorpe A."/>
            <person name="Torcasso W."/>
            <person name="Tracey A."/>
            <person name="Tromans A."/>
            <person name="Tsolas J."/>
            <person name="Wall M."/>
            <person name="Walsh J."/>
            <person name="Wang H."/>
            <person name="Weinstock K."/>
            <person name="West A.P."/>
            <person name="Willey D.L."/>
            <person name="Whitehead S.L."/>
            <person name="Wilming L."/>
            <person name="Wray P.W."/>
            <person name="Young L."/>
            <person name="Chen Y."/>
            <person name="Lovering R.C."/>
            <person name="Moschonas N.K."/>
            <person name="Siebert R."/>
            <person name="Fechtel K."/>
            <person name="Bentley D."/>
            <person name="Durbin R.M."/>
            <person name="Hubbard T."/>
            <person name="Doucette-Stamm L."/>
            <person name="Beck S."/>
            <person name="Smith D.R."/>
            <person name="Rogers J."/>
        </authorList>
    </citation>
    <scope>NUCLEOTIDE SEQUENCE [LARGE SCALE GENOMIC DNA]</scope>
</reference>
<reference key="6">
    <citation type="submission" date="2005-07" db="EMBL/GenBank/DDBJ databases">
        <authorList>
            <person name="Mural R.J."/>
            <person name="Istrail S."/>
            <person name="Sutton G."/>
            <person name="Florea L."/>
            <person name="Halpern A.L."/>
            <person name="Mobarry C.M."/>
            <person name="Lippert R."/>
            <person name="Walenz B."/>
            <person name="Shatkay H."/>
            <person name="Dew I."/>
            <person name="Miller J.R."/>
            <person name="Flanigan M.J."/>
            <person name="Edwards N.J."/>
            <person name="Bolanos R."/>
            <person name="Fasulo D."/>
            <person name="Halldorsson B.V."/>
            <person name="Hannenhalli S."/>
            <person name="Turner R."/>
            <person name="Yooseph S."/>
            <person name="Lu F."/>
            <person name="Nusskern D.R."/>
            <person name="Shue B.C."/>
            <person name="Zheng X.H."/>
            <person name="Zhong F."/>
            <person name="Delcher A.L."/>
            <person name="Huson D.H."/>
            <person name="Kravitz S.A."/>
            <person name="Mouchard L."/>
            <person name="Reinert K."/>
            <person name="Remington K.A."/>
            <person name="Clark A.G."/>
            <person name="Waterman M.S."/>
            <person name="Eichler E.E."/>
            <person name="Adams M.D."/>
            <person name="Hunkapiller M.W."/>
            <person name="Myers E.W."/>
            <person name="Venter J.C."/>
        </authorList>
    </citation>
    <scope>NUCLEOTIDE SEQUENCE [LARGE SCALE GENOMIC DNA]</scope>
</reference>
<reference key="7">
    <citation type="journal article" date="2004" name="Genome Res.">
        <title>The status, quality, and expansion of the NIH full-length cDNA project: the Mammalian Gene Collection (MGC).</title>
        <authorList>
            <consortium name="The MGC Project Team"/>
        </authorList>
    </citation>
    <scope>NUCLEOTIDE SEQUENCE [LARGE SCALE MRNA] (ISOFORM ALPHA)</scope>
    <source>
        <tissue>Placenta</tissue>
    </source>
</reference>
<reference key="8">
    <citation type="journal article" date="1994" name="Cancer Res.">
        <title>Frequent activation of ret protooncogene by fusion with a new activating gene in papillary thyroid carcinomas.</title>
        <authorList>
            <person name="Bongarzone I."/>
            <person name="Butti M.G."/>
            <person name="Coronelli S."/>
            <person name="Borrello M.G."/>
            <person name="Santoro M."/>
            <person name="Mondellini P."/>
            <person name="Pilotti S."/>
            <person name="Fusco A."/>
            <person name="Della Porta G."/>
            <person name="Pierotti M.A."/>
        </authorList>
    </citation>
    <scope>NUCLEOTIDE SEQUENCE [MRNA] OF 1-238</scope>
    <scope>CHROMOSOMAL REARRANGEMENT WITH RET</scope>
    <source>
        <tissue>Thyroid tumor</tissue>
    </source>
</reference>
<reference key="9">
    <citation type="journal article" date="1999" name="Mol. Endocrinol.">
        <title>Interaction of the putative androgen receptor-specific coactivator ARA70/ELE1alpha with multiple steroid receptors and identification of an internally deleted ELE1beta isoform.</title>
        <authorList>
            <person name="Alen P."/>
            <person name="Claessens F."/>
            <person name="Schoenmakers E."/>
            <person name="Swinnen J.V."/>
            <person name="Verhoeven G."/>
            <person name="Rombauts W."/>
            <person name="Peeters B."/>
        </authorList>
    </citation>
    <scope>NUCLEOTIDE SEQUENCE [MRNA] (ISOFORMS ALPHA AND BETA)</scope>
    <scope>VARIANTS LEU-94; LEU-154; ARG-350 AND PRO-561</scope>
    <source>
        <tissue>Cervix carcinoma</tissue>
        <tissue>Mammary cancer</tissue>
        <tissue>Prostatic carcinoma</tissue>
    </source>
</reference>
<reference key="10">
    <citation type="journal article" date="1999" name="J. Biol. Chem.">
        <title>Identification of ARA70 as a ligand-enhanced coactivator for the peroxisome proliferator-activated receptor gamma.</title>
        <authorList>
            <person name="Heinlein C.A."/>
            <person name="Ting H.-J."/>
            <person name="Yeh S."/>
            <person name="Chang C."/>
        </authorList>
    </citation>
    <scope>FUNCTION</scope>
    <scope>INTERACTION WITH RXRG</scope>
    <scope>MUTAGENESIS OF 95-LEU-LEU-96</scope>
</reference>
<reference key="11">
    <citation type="journal article" date="1999" name="Mol. Endocrinol.">
        <title>RFG (ARA70, ELE1) interacts with the human androgen receptor in a ligand-dependent fashion, but functions only weakly as a coactivator in cotransfection assays.</title>
        <authorList>
            <person name="Gao T."/>
            <person name="Brantley K."/>
            <person name="Bolu E."/>
            <person name="McPhaul M.J."/>
        </authorList>
    </citation>
    <scope>FUNCTION</scope>
    <scope>INTERACTION WITH AR</scope>
</reference>
<reference key="12">
    <citation type="journal article" date="2014" name="Mol. Cell">
        <title>NCOA4 transcriptional coactivator inhibits activation of DNA replication origins.</title>
        <authorList>
            <person name="Bellelli R."/>
            <person name="Castellone M.D."/>
            <person name="Guida T."/>
            <person name="Limongello R."/>
            <person name="Dathan N.A."/>
            <person name="Merolla F."/>
            <person name="Cirafici A.M."/>
            <person name="Affuso A."/>
            <person name="Masai H."/>
            <person name="Costanzo V."/>
            <person name="Grieco D."/>
            <person name="Fusco A."/>
            <person name="Santoro M."/>
            <person name="Carlomagno F."/>
        </authorList>
    </citation>
    <scope>FUNCTION</scope>
    <scope>SUBCELLULAR LOCATION</scope>
    <scope>INTERACTION WITH MCM7; MCM3 AND CDC45</scope>
    <scope>MUTAGENESIS OF 95-LEU-LEU-96</scope>
</reference>
<reference key="13">
    <citation type="journal article" date="2014" name="Nat. Cell Biol.">
        <title>Selective VPS34 inhibitor blocks autophagy and uncovers a role for NCOA4 in ferritin degradation and iron homeostasis in vivo.</title>
        <authorList>
            <person name="Dowdle W.E."/>
            <person name="Nyfeler B."/>
            <person name="Nagel J."/>
            <person name="Elling R.A."/>
            <person name="Liu S."/>
            <person name="Triantafellow E."/>
            <person name="Menon S."/>
            <person name="Wang Z."/>
            <person name="Honda A."/>
            <person name="Pardee G."/>
            <person name="Cantwell J."/>
            <person name="Luu C."/>
            <person name="Cornella-Taracido I."/>
            <person name="Harrington E."/>
            <person name="Fekkes P."/>
            <person name="Lei H."/>
            <person name="Fang Q."/>
            <person name="Digan M.E."/>
            <person name="Burdick D."/>
            <person name="Powers A.F."/>
            <person name="Helliwell S.B."/>
            <person name="D'Aquin S."/>
            <person name="Bastien J."/>
            <person name="Wang H."/>
            <person name="Wiederschain D."/>
            <person name="Kuerth J."/>
            <person name="Bergman P."/>
            <person name="Schwalb D."/>
            <person name="Thomas J."/>
            <person name="Ugwonali S."/>
            <person name="Harbinski F."/>
            <person name="Tallarico J."/>
            <person name="Wilson C.J."/>
            <person name="Myer V.E."/>
            <person name="Porter J.A."/>
            <person name="Bussiere D.E."/>
            <person name="Finan P.M."/>
            <person name="Labow M.A."/>
            <person name="Mao X."/>
            <person name="Hamann L.G."/>
            <person name="Manning B.D."/>
            <person name="Valdez R.A."/>
            <person name="Nicholson T."/>
            <person name="Schirle M."/>
            <person name="Knapp M.S."/>
            <person name="Keaney E.P."/>
            <person name="Murphy L.O."/>
        </authorList>
    </citation>
    <scope>FUNCTION</scope>
    <scope>INTERACTION WITH THE FERRITIN COMPLEX</scope>
    <scope>INTERACTION WITH FTH1 AND FTL</scope>
    <scope>SUBCELLULAR LOCATION</scope>
    <scope>INDUCTION</scope>
</reference>
<reference key="14">
    <citation type="journal article" date="2015" name="Elife">
        <title>Ferritinophagy via NCOA4 is required for erythropoiesis and is regulated by iron dependent HERC2-mediated proteolysis.</title>
        <authorList>
            <person name="Mancias J.D."/>
            <person name="Pontano Vaites L."/>
            <person name="Nissim S."/>
            <person name="Biancur D.E."/>
            <person name="Kim A.J."/>
            <person name="Wang X."/>
            <person name="Liu Y."/>
            <person name="Goessling W."/>
            <person name="Kimmelman A.C."/>
            <person name="Harper J.W."/>
        </authorList>
    </citation>
    <scope>FUNCTION</scope>
    <scope>INTERACTION WITH FTH1</scope>
    <scope>PTM</scope>
    <scope>MUTAGENESIS OF 489-ILE--TRP-497</scope>
</reference>
<reference evidence="18" key="15">
    <citation type="journal article" date="2005" name="J. Biol. Chem.">
        <title>The molecular mechanisms of coactivator utilization in ligand-dependent transactivation by the androgen receptor.</title>
        <authorList>
            <person name="Estebanez-Perpina E."/>
            <person name="Moore J.M.R."/>
            <person name="Mar E."/>
            <person name="Delgado-Rodrigues E."/>
            <person name="Nguyen P."/>
            <person name="Baxter J.D."/>
            <person name="Buehrer B.M."/>
            <person name="Webb P."/>
            <person name="Fletterick R.J."/>
            <person name="Guy R.K."/>
        </authorList>
    </citation>
    <scope>X-RAY CRYSTALLOGRAPHY (2.30 ANGSTROMS) OF 322-336 IN COMPLEX WITH AR; NCOA1; NCOA2 AND NCOA3</scope>
    <scope>INTERACTION WITH AR</scope>
</reference>
<dbReference type="EMBL" id="L49399">
    <property type="protein sequence ID" value="AAC37591.1"/>
    <property type="molecule type" value="mRNA"/>
</dbReference>
<dbReference type="EMBL" id="X77548">
    <property type="protein sequence ID" value="CAA54673.1"/>
    <property type="molecule type" value="mRNA"/>
</dbReference>
<dbReference type="EMBL" id="AK292480">
    <property type="protein sequence ID" value="BAF85169.1"/>
    <property type="molecule type" value="mRNA"/>
</dbReference>
<dbReference type="EMBL" id="AK304123">
    <property type="protein sequence ID" value="BAG65022.1"/>
    <property type="molecule type" value="mRNA"/>
</dbReference>
<dbReference type="EMBL" id="AK310849">
    <property type="status" value="NOT_ANNOTATED_CDS"/>
    <property type="molecule type" value="mRNA"/>
</dbReference>
<dbReference type="EMBL" id="AL162047">
    <property type="protein sequence ID" value="CAB82390.1"/>
    <property type="molecule type" value="mRNA"/>
</dbReference>
<dbReference type="EMBL" id="AL450342">
    <property type="status" value="NOT_ANNOTATED_CDS"/>
    <property type="molecule type" value="Genomic_DNA"/>
</dbReference>
<dbReference type="EMBL" id="CH471260">
    <property type="protein sequence ID" value="EAW53686.1"/>
    <property type="molecule type" value="Genomic_DNA"/>
</dbReference>
<dbReference type="EMBL" id="BC001562">
    <property type="protein sequence ID" value="AAH01562.1"/>
    <property type="molecule type" value="mRNA"/>
</dbReference>
<dbReference type="EMBL" id="X71413">
    <property type="protein sequence ID" value="CAA50536.1"/>
    <property type="molecule type" value="mRNA"/>
</dbReference>
<dbReference type="CCDS" id="CCDS73092.1">
    <molecule id="Q13772-1"/>
</dbReference>
<dbReference type="CCDS" id="CCDS73093.1">
    <molecule id="Q13772-3"/>
</dbReference>
<dbReference type="CCDS" id="CCDS73094.1">
    <molecule id="Q13772-4"/>
</dbReference>
<dbReference type="PIR" id="S61532">
    <property type="entry name" value="S61532"/>
</dbReference>
<dbReference type="RefSeq" id="NP_001138732.1">
    <molecule id="Q13772-4"/>
    <property type="nucleotide sequence ID" value="NM_001145260.2"/>
</dbReference>
<dbReference type="RefSeq" id="NP_001138733.1">
    <molecule id="Q13772-3"/>
    <property type="nucleotide sequence ID" value="NM_001145261.2"/>
</dbReference>
<dbReference type="RefSeq" id="NP_001138734.1">
    <molecule id="Q13772-1"/>
    <property type="nucleotide sequence ID" value="NM_001145262.2"/>
</dbReference>
<dbReference type="RefSeq" id="NP_001138735.1">
    <molecule id="Q13772-1"/>
    <property type="nucleotide sequence ID" value="NM_001145263.2"/>
</dbReference>
<dbReference type="RefSeq" id="NP_005428.1">
    <molecule id="Q13772-1"/>
    <property type="nucleotide sequence ID" value="NM_005437.4"/>
</dbReference>
<dbReference type="PDB" id="1T5Z">
    <property type="method" value="X-ray"/>
    <property type="resolution" value="2.30 A"/>
    <property type="chains" value="B=322-336"/>
</dbReference>
<dbReference type="PDB" id="8QU9">
    <property type="method" value="EM"/>
    <property type="resolution" value="2.88 A"/>
    <property type="chains" value="B=484-499"/>
</dbReference>
<dbReference type="PDBsum" id="1T5Z"/>
<dbReference type="PDBsum" id="8QU9"/>
<dbReference type="EMDB" id="EMD-18658"/>
<dbReference type="SMR" id="Q13772"/>
<dbReference type="BioGRID" id="113726">
    <property type="interactions" value="56"/>
</dbReference>
<dbReference type="CORUM" id="Q13772"/>
<dbReference type="DIP" id="DIP-5957N"/>
<dbReference type="FunCoup" id="Q13772">
    <property type="interactions" value="1205"/>
</dbReference>
<dbReference type="IntAct" id="Q13772">
    <property type="interactions" value="27"/>
</dbReference>
<dbReference type="STRING" id="9606.ENSP00000463027"/>
<dbReference type="BindingDB" id="Q13772"/>
<dbReference type="GlyCosmos" id="Q13772">
    <property type="glycosylation" value="1 site, 1 glycan"/>
</dbReference>
<dbReference type="GlyGen" id="Q13772">
    <property type="glycosylation" value="3 sites, 1 O-linked glycan (2 sites)"/>
</dbReference>
<dbReference type="iPTMnet" id="Q13772"/>
<dbReference type="PhosphoSitePlus" id="Q13772"/>
<dbReference type="BioMuta" id="NCOA4"/>
<dbReference type="DMDM" id="8928226"/>
<dbReference type="jPOST" id="Q13772"/>
<dbReference type="MassIVE" id="Q13772"/>
<dbReference type="PaxDb" id="9606-ENSP00000463027"/>
<dbReference type="PeptideAtlas" id="Q13772"/>
<dbReference type="ProteomicsDB" id="19088"/>
<dbReference type="ProteomicsDB" id="59681">
    <molecule id="Q13772-1"/>
</dbReference>
<dbReference type="ProteomicsDB" id="59682">
    <molecule id="Q13772-2"/>
</dbReference>
<dbReference type="Pumba" id="Q13772"/>
<dbReference type="Antibodypedia" id="72715">
    <property type="antibodies" value="428 antibodies from 35 providers"/>
</dbReference>
<dbReference type="DNASU" id="8031"/>
<dbReference type="Ensembl" id="ENST00000578454.5">
    <molecule id="Q13772-4"/>
    <property type="protein sequence ID" value="ENSP00000463027.1"/>
    <property type="gene ID" value="ENSG00000266412.6"/>
</dbReference>
<dbReference type="Ensembl" id="ENST00000579039.2">
    <molecule id="Q13772-3"/>
    <property type="protein sequence ID" value="ENSP00000463455.1"/>
    <property type="gene ID" value="ENSG00000266412.6"/>
</dbReference>
<dbReference type="Ensembl" id="ENST00000581486.6">
    <molecule id="Q13772-1"/>
    <property type="protein sequence ID" value="ENSP00000462943.1"/>
    <property type="gene ID" value="ENSG00000266412.6"/>
</dbReference>
<dbReference type="Ensembl" id="ENST00000583565.5">
    <molecule id="Q13772-1"/>
    <property type="protein sequence ID" value="ENSP00000463476.1"/>
    <property type="gene ID" value="ENSG00000266412.6"/>
</dbReference>
<dbReference type="Ensembl" id="ENST00000585132.5">
    <molecule id="Q13772-1"/>
    <property type="protein sequence ID" value="ENSP00000464054.1"/>
    <property type="gene ID" value="ENSG00000266412.6"/>
</dbReference>
<dbReference type="GeneID" id="8031"/>
<dbReference type="KEGG" id="hsa:8031"/>
<dbReference type="MANE-Select" id="ENST00000581486.6">
    <property type="protein sequence ID" value="ENSP00000462943.1"/>
    <property type="RefSeq nucleotide sequence ID" value="NM_001145263.2"/>
    <property type="RefSeq protein sequence ID" value="NP_001138735.1"/>
</dbReference>
<dbReference type="UCSC" id="uc001jis.5">
    <molecule id="Q13772-1"/>
    <property type="organism name" value="human"/>
</dbReference>
<dbReference type="AGR" id="HGNC:7671"/>
<dbReference type="CTD" id="8031"/>
<dbReference type="DisGeNET" id="8031"/>
<dbReference type="GeneCards" id="NCOA4"/>
<dbReference type="HGNC" id="HGNC:7671">
    <property type="gene designation" value="NCOA4"/>
</dbReference>
<dbReference type="HPA" id="ENSG00000266412">
    <property type="expression patterns" value="Low tissue specificity"/>
</dbReference>
<dbReference type="MalaCards" id="NCOA4"/>
<dbReference type="MIM" id="601984">
    <property type="type" value="gene"/>
</dbReference>
<dbReference type="neXtProt" id="NX_Q13772"/>
<dbReference type="OpenTargets" id="ENSG00000266412"/>
<dbReference type="Orphanet" id="146">
    <property type="disease" value="Differentiated thyroid carcinoma"/>
</dbReference>
<dbReference type="PharmGKB" id="PA31473"/>
<dbReference type="VEuPathDB" id="HostDB:ENSG00000266412"/>
<dbReference type="eggNOG" id="ENOG502QQ6V">
    <property type="taxonomic scope" value="Eukaryota"/>
</dbReference>
<dbReference type="GeneTree" id="ENSGT00390000008403"/>
<dbReference type="HOGENOM" id="CLU_034170_0_0_1"/>
<dbReference type="InParanoid" id="Q13772"/>
<dbReference type="OMA" id="FPPDCYG"/>
<dbReference type="OrthoDB" id="6334544at2759"/>
<dbReference type="PAN-GO" id="Q13772">
    <property type="GO annotations" value="1 GO annotation based on evolutionary models"/>
</dbReference>
<dbReference type="PhylomeDB" id="Q13772"/>
<dbReference type="TreeFam" id="TF333204"/>
<dbReference type="PathwayCommons" id="Q13772"/>
<dbReference type="Reactome" id="R-HSA-9841922">
    <property type="pathway name" value="MLL4 and MLL3 complexes regulate expression of PPARG target genes in adipogenesis and hepatic steatosis"/>
</dbReference>
<dbReference type="SignaLink" id="Q13772"/>
<dbReference type="SIGNOR" id="Q13772"/>
<dbReference type="BioGRID-ORCS" id="8031">
    <property type="hits" value="157 hits in 1161 CRISPR screens"/>
</dbReference>
<dbReference type="CD-CODE" id="8C2F96ED">
    <property type="entry name" value="Centrosome"/>
</dbReference>
<dbReference type="CD-CODE" id="ECAD3DEA">
    <property type="entry name" value="Ferritin -NCOA4 condensate"/>
</dbReference>
<dbReference type="ChiTaRS" id="NCOA4">
    <property type="organism name" value="human"/>
</dbReference>
<dbReference type="EvolutionaryTrace" id="Q13772"/>
<dbReference type="GeneWiki" id="NCOA4"/>
<dbReference type="GenomeRNAi" id="8031"/>
<dbReference type="Pharos" id="Q13772">
    <property type="development level" value="Tbio"/>
</dbReference>
<dbReference type="PRO" id="PR:Q13772"/>
<dbReference type="Proteomes" id="UP000005640">
    <property type="component" value="Chromosome 10"/>
</dbReference>
<dbReference type="RNAct" id="Q13772">
    <property type="molecule type" value="protein"/>
</dbReference>
<dbReference type="Bgee" id="ENSG00000266412">
    <property type="expression patterns" value="Expressed in jejunal mucosa and 215 other cell types or tissues"/>
</dbReference>
<dbReference type="ExpressionAtlas" id="Q13772">
    <property type="expression patterns" value="baseline and differential"/>
</dbReference>
<dbReference type="GO" id="GO:0044754">
    <property type="term" value="C:autolysosome"/>
    <property type="evidence" value="ECO:0000314"/>
    <property type="project" value="MGI"/>
</dbReference>
<dbReference type="GO" id="GO:0005776">
    <property type="term" value="C:autophagosome"/>
    <property type="evidence" value="ECO:0007669"/>
    <property type="project" value="UniProtKB-SubCell"/>
</dbReference>
<dbReference type="GO" id="GO:0005694">
    <property type="term" value="C:chromosome"/>
    <property type="evidence" value="ECO:0007669"/>
    <property type="project" value="UniProtKB-SubCell"/>
</dbReference>
<dbReference type="GO" id="GO:0031410">
    <property type="term" value="C:cytoplasmic vesicle"/>
    <property type="evidence" value="ECO:0007669"/>
    <property type="project" value="UniProtKB-KW"/>
</dbReference>
<dbReference type="GO" id="GO:0005654">
    <property type="term" value="C:nucleoplasm"/>
    <property type="evidence" value="ECO:0000304"/>
    <property type="project" value="Reactome"/>
</dbReference>
<dbReference type="GO" id="GO:0005634">
    <property type="term" value="C:nucleus"/>
    <property type="evidence" value="ECO:0000304"/>
    <property type="project" value="ProtInc"/>
</dbReference>
<dbReference type="GO" id="GO:0003713">
    <property type="term" value="F:transcription coactivator activity"/>
    <property type="evidence" value="ECO:0000304"/>
    <property type="project" value="ProtInc"/>
</dbReference>
<dbReference type="GO" id="GO:0071391">
    <property type="term" value="P:cellular response to estrogen stimulus"/>
    <property type="evidence" value="ECO:0000303"/>
    <property type="project" value="ARUK-UCL"/>
</dbReference>
<dbReference type="GO" id="GO:0071394">
    <property type="term" value="P:cellular response to testosterone stimulus"/>
    <property type="evidence" value="ECO:0000303"/>
    <property type="project" value="ARUK-UCL"/>
</dbReference>
<dbReference type="GO" id="GO:0030520">
    <property type="term" value="P:estrogen receptor signaling pathway"/>
    <property type="evidence" value="ECO:0000303"/>
    <property type="project" value="ARUK-UCL"/>
</dbReference>
<dbReference type="GO" id="GO:0006879">
    <property type="term" value="P:intracellular iron ion homeostasis"/>
    <property type="evidence" value="ECO:0007669"/>
    <property type="project" value="Ensembl"/>
</dbReference>
<dbReference type="GO" id="GO:0008584">
    <property type="term" value="P:male gonad development"/>
    <property type="evidence" value="ECO:0000304"/>
    <property type="project" value="ProtInc"/>
</dbReference>
<dbReference type="GO" id="GO:0006622">
    <property type="term" value="P:protein targeting to lysosome"/>
    <property type="evidence" value="ECO:0000314"/>
    <property type="project" value="MGI"/>
</dbReference>
<dbReference type="GO" id="GO:0009725">
    <property type="term" value="P:response to hormone"/>
    <property type="evidence" value="ECO:0000318"/>
    <property type="project" value="GO_Central"/>
</dbReference>
<dbReference type="IDEAL" id="IID00074"/>
<dbReference type="InterPro" id="IPR039947">
    <property type="entry name" value="NCoA-4"/>
</dbReference>
<dbReference type="InterPro" id="IPR022174">
    <property type="entry name" value="NCOA4_N"/>
</dbReference>
<dbReference type="PANTHER" id="PTHR17085">
    <property type="entry name" value="NUCLEAR RECEPTOR COACTIVATOR 4"/>
    <property type="match status" value="1"/>
</dbReference>
<dbReference type="PANTHER" id="PTHR17085:SF5">
    <property type="entry name" value="NUCLEAR RECEPTOR COACTIVATOR 4"/>
    <property type="match status" value="1"/>
</dbReference>
<dbReference type="Pfam" id="PF12489">
    <property type="entry name" value="ARA70"/>
    <property type="match status" value="2"/>
</dbReference>
<feature type="chain" id="PRO_0000094410" description="Nuclear receptor coactivator 4">
    <location>
        <begin position="1"/>
        <end position="614"/>
    </location>
</feature>
<feature type="region of interest" description="Interaction with ferritin heavy chain FTH1" evidence="8">
    <location>
        <begin position="383"/>
        <end position="522"/>
    </location>
</feature>
<feature type="region of interest" description="Disordered" evidence="2">
    <location>
        <begin position="501"/>
        <end position="524"/>
    </location>
</feature>
<feature type="compositionally biased region" description="Basic and acidic residues" evidence="2">
    <location>
        <begin position="502"/>
        <end position="519"/>
    </location>
</feature>
<feature type="site" description="Breakpoint for rearrangement to form RET/PTC3 oncogene">
    <location>
        <begin position="238"/>
        <end position="239"/>
    </location>
</feature>
<feature type="splice variant" id="VSP_046348" description="In isoform 3 and isoform 4." evidence="13">
    <original>M</original>
    <variation>MGAQLTTFALAGAVRRM</variation>
    <location>
        <position position="1"/>
    </location>
</feature>
<feature type="splice variant" id="VSP_003409" description="In isoform Beta." evidence="15">
    <location>
        <begin position="239"/>
        <end position="565"/>
    </location>
</feature>
<feature type="splice variant" id="VSP_046349" description="In isoform 4." evidence="13">
    <original>M</original>
    <variation>AYFKMNFQDVTVGNFQIPCGF</variation>
    <location>
        <position position="614"/>
    </location>
</feature>
<feature type="sequence variant" id="VAR_009190" description="In dbSNP:rs782517064." evidence="12">
    <original>S</original>
    <variation>L</variation>
    <location>
        <position position="94"/>
    </location>
</feature>
<feature type="sequence variant" id="VAR_009191" evidence="12">
    <original>F</original>
    <variation>L</variation>
    <location>
        <position position="154"/>
    </location>
</feature>
<feature type="sequence variant" id="VAR_009192" evidence="12">
    <original>C</original>
    <variation>R</variation>
    <location>
        <position position="350"/>
    </location>
</feature>
<feature type="sequence variant" id="VAR_014928" description="In dbSNP:rs1132111.">
    <original>P</original>
    <variation>R</variation>
    <location>
        <position position="474"/>
    </location>
</feature>
<feature type="sequence variant" id="VAR_009193" evidence="12">
    <original>L</original>
    <variation>P</variation>
    <location>
        <position position="561"/>
    </location>
</feature>
<feature type="mutagenesis site" description="Decreased interaction with PPAR and RXR. No impact on interaction with MCM7. No impact on binding to DNA replication origins." evidence="3 6">
    <original>LL</original>
    <variation>AA</variation>
    <location>
        <begin position="95"/>
        <end position="96"/>
    </location>
</feature>
<feature type="mutagenesis site" description="Abrogates interaction with ferritin heavy chain FTH1. Attenuates FTH1 localization to lysosomes following iron chelation." evidence="8">
    <original>IKNSPLSEW</original>
    <variation>AKNSPLSEA</variation>
    <location>
        <begin position="489"/>
        <end position="497"/>
    </location>
</feature>
<feature type="sequence conflict" description="In Ref. 3; BAG65022." evidence="16" ref="3">
    <original>Y</original>
    <variation>H</variation>
    <location>
        <position position="71"/>
    </location>
</feature>
<feature type="sequence conflict" description="In Ref. 8; CAA50536." evidence="16" ref="8">
    <original>I</original>
    <variation>T</variation>
    <location>
        <position position="162"/>
    </location>
</feature>
<feature type="sequence conflict" description="In Ref. 8; CAA50536." evidence="16" ref="8">
    <original>G</original>
    <variation>S</variation>
    <location>
        <position position="183"/>
    </location>
</feature>
<feature type="sequence conflict" description="In Ref. 3; AK310849." evidence="16" ref="3">
    <original>K</original>
    <variation>R</variation>
    <location>
        <position position="271"/>
    </location>
</feature>
<feature type="helix" evidence="19">
    <location>
        <begin position="327"/>
        <end position="333"/>
    </location>
</feature>
<feature type="helix" evidence="20">
    <location>
        <begin position="485"/>
        <end position="490"/>
    </location>
</feature>
<feature type="helix" evidence="20">
    <location>
        <begin position="494"/>
        <end position="496"/>
    </location>
</feature>
<feature type="sequence conflict" description="In Ref. 3; BAG65022." evidence="16" ref="3">
    <original>F</original>
    <variation>V</variation>
    <location sequence="Q13772-3">
        <position position="8"/>
    </location>
</feature>
<feature type="sequence conflict" description="In Ref. 3; AK310849." evidence="16" ref="3">
    <original>F</original>
    <variation>V</variation>
    <location sequence="Q13772-4">
        <position position="8"/>
    </location>
</feature>
<evidence type="ECO:0000250" key="1">
    <source>
        <dbReference type="UniProtKB" id="Q9BXW4"/>
    </source>
</evidence>
<evidence type="ECO:0000256" key="2">
    <source>
        <dbReference type="SAM" id="MobiDB-lite"/>
    </source>
</evidence>
<evidence type="ECO:0000269" key="3">
    <source>
    </source>
</evidence>
<evidence type="ECO:0000269" key="4">
    <source>
    </source>
</evidence>
<evidence type="ECO:0000269" key="5">
    <source>
    </source>
</evidence>
<evidence type="ECO:0000269" key="6">
    <source>
    </source>
</evidence>
<evidence type="ECO:0000269" key="7">
    <source>
    </source>
</evidence>
<evidence type="ECO:0000269" key="8">
    <source>
    </source>
</evidence>
<evidence type="ECO:0000269" key="9">
    <source>
    </source>
</evidence>
<evidence type="ECO:0000269" key="10">
    <source>
    </source>
</evidence>
<evidence type="ECO:0000269" key="11">
    <source>
    </source>
</evidence>
<evidence type="ECO:0000269" key="12">
    <source>
    </source>
</evidence>
<evidence type="ECO:0000303" key="13">
    <source>
    </source>
</evidence>
<evidence type="ECO:0000303" key="14">
    <source>
    </source>
</evidence>
<evidence type="ECO:0000303" key="15">
    <source>
    </source>
</evidence>
<evidence type="ECO:0000305" key="16"/>
<evidence type="ECO:0000312" key="17">
    <source>
        <dbReference type="HGNC" id="HGNC:7671"/>
    </source>
</evidence>
<evidence type="ECO:0007744" key="18">
    <source>
        <dbReference type="PDB" id="1T5Z"/>
    </source>
</evidence>
<evidence type="ECO:0007829" key="19">
    <source>
        <dbReference type="PDB" id="1T5Z"/>
    </source>
</evidence>
<evidence type="ECO:0007829" key="20">
    <source>
        <dbReference type="PDB" id="8QU9"/>
    </source>
</evidence>
<sequence length="614" mass="69726">MNTFQDQSGSSSNREPLLRCSDARRDLELAIGGVLRAEQQIKDNLREVKAQIHSCISRHLECLRSREVWLYEQVDLIYQLKEETLQQQAQQLYSLLGQFNCLTHQLECTQNKDLANQVSVCLERLGSLTLKPEDSTVLLFEADTITLRQTITTFGSLKTIQIPEHLMAHASSANIGPFLEKRGCISMPEQKSASGIVAVPFSEWLLGSKPASGYQAPYIPSTDPQDWLTQKQTLENSQTSSRACNFFNNVGGNLKGLENWLLKSEKSSYQKCNSHSTTSSFSIEMEKVGDQELPDQDEMDLSDWLVTPQESHKLRKPENGSRETSEKFKLLFQSYNVNDWLVKTDSCTNCQGNQPKGVEIENLGNLKCLNDHLEAKKPLSTPSMVTEDWLVQNHQDPCKVEEVCRANEPCTSFAECVCDENCEKEALYKWLLKKEGKDKNGMPVEPKPEPEKHKDSLNMWLCPRKEVIEQTKAPKAMTPSRIADSFQVIKNSPLSEWLIRPPYKEGSPKEVPGTEDRAGKQKFKSPMNTSWCSFNTADWVLPGKKMGNLSQLSSGEDKWLLRKKAQEVLLNSPLQEEHNFPPDHYGLPAVCDLFACMQLKVDKEKWLYRTPLQM</sequence>
<protein>
    <recommendedName>
        <fullName evidence="17">Nuclear receptor coactivator 4</fullName>
        <shortName evidence="16">NCoA-4</shortName>
    </recommendedName>
    <alternativeName>
        <fullName evidence="14">Androgen receptor coactivator 70 kDa protein</fullName>
        <shortName evidence="14">70 kDa AR-activator</shortName>
        <shortName evidence="14">70 kDa androgen receptor coactivator</shortName>
    </alternativeName>
    <alternativeName>
        <fullName evidence="16">Androgen receptor-associated protein of 70 kDa</fullName>
    </alternativeName>
    <alternativeName>
        <fullName evidence="16">Ferritin cargo receptor NCOA4</fullName>
    </alternativeName>
    <alternativeName>
        <fullName evidence="16">Ret-activating protein ELE1</fullName>
    </alternativeName>
</protein>
<organism>
    <name type="scientific">Homo sapiens</name>
    <name type="common">Human</name>
    <dbReference type="NCBI Taxonomy" id="9606"/>
    <lineage>
        <taxon>Eukaryota</taxon>
        <taxon>Metazoa</taxon>
        <taxon>Chordata</taxon>
        <taxon>Craniata</taxon>
        <taxon>Vertebrata</taxon>
        <taxon>Euteleostomi</taxon>
        <taxon>Mammalia</taxon>
        <taxon>Eutheria</taxon>
        <taxon>Euarchontoglires</taxon>
        <taxon>Primates</taxon>
        <taxon>Haplorrhini</taxon>
        <taxon>Catarrhini</taxon>
        <taxon>Hominidae</taxon>
        <taxon>Homo</taxon>
    </lineage>
</organism>
<keyword id="KW-0002">3D-structure</keyword>
<keyword id="KW-0010">Activator</keyword>
<keyword id="KW-0025">Alternative splicing</keyword>
<keyword id="KW-0160">Chromosomal rearrangement</keyword>
<keyword id="KW-0158">Chromosome</keyword>
<keyword id="KW-0968">Cytoplasmic vesicle</keyword>
<keyword id="KW-0458">Lysosome</keyword>
<keyword id="KW-0539">Nucleus</keyword>
<keyword id="KW-1267">Proteomics identification</keyword>
<keyword id="KW-0656">Proto-oncogene</keyword>
<keyword id="KW-1185">Reference proteome</keyword>
<keyword id="KW-0804">Transcription</keyword>
<keyword id="KW-0805">Transcription regulation</keyword>
<keyword id="KW-0832">Ubl conjugation</keyword>
<accession>Q13772</accession>
<accession>A8K8W5</accession>
<accession>B4E260</accession>
<accession>E9PAV7</accession>
<accession>J3KQN8</accession>
<accession>Q14239</accession>
<proteinExistence type="evidence at protein level"/>
<gene>
    <name type="primary">NCOA4</name>
    <name evidence="14" type="synonym">ARA70</name>
    <name type="synonym">ELE1</name>
    <name type="synonym">RFG</name>
</gene>
<name>NCOA4_HUMAN</name>
<comment type="function">
    <text evidence="3 4 6 7 8 11">Cargo receptor for the autophagic turnover of the iron-binding ferritin complex, playing a central role in iron homeostasis (PubMed:25327288, PubMed:26436293). Acts as an adapter for delivery of ferritin to lysosomes and autophagic degradation of ferritin, a process named ferritinophagy (PubMed:25327288, PubMed:26436293). Targets the iron-binding ferritin complex to autolysosomes following starvation or iron depletion (PubMed:25327288). Ensures efficient erythropoiesis, possibly by regulating hemin-induced erythroid differentiation (PubMed:26436293). In some studies, has been shown to enhance the androgen receptor AR transcriptional activity as well as acting as ligand-independent coactivator of the peroxisome proliferator-activated receptor (PPAR) gamma (PubMed:10347167, PubMed:8643607). Another study shows only weak behavior as a coactivator for the androgen receptor and no alteration of the ligand responsiveness of the AR (PubMed:10517667). Binds to DNA replication origins, binding is not restricted to sites of active transcription and may likely be independent from the nuclear receptor transcriptional coactivator function (PubMed:24910095). May inhibit activation of DNA replication origins, possibly by obstructing DNA unwinding via interaction with the MCM2-7 complex (PubMed:24910095).</text>
</comment>
<comment type="subunit">
    <text evidence="1 3 4 5 6 7 8 11">Interacts with the ferritin complex, an oligomeric structure composed of varying combinations of ferritin heavy chains and ferritin light chains (PubMed:25327288). Interacts (via C-terminus) with ferritin heavy chain FTH1 (via 'Arg-23'); thereby targeting the iron-binding ferritin complex to autolysosomes following starvation or iron depletion (PubMed:25327288, PubMed:26436293). Interacts with ferritin light chain FTL (PubMed:25327288). Interacts (via C-terminus) with ATG8-like proteins GABARAP and GABARAPL1; thereby mediating localization to autophagosomes and ferritinophagy (By similarity). Interacts with MAP1LC3C/LC3C and GABARAPL2 (By similarity). Interacts with the androgen receptor AR (via NR DNA binding domain and NR LBD) in a ligand-dependent manner (PubMed:10517667, PubMed:15563469, PubMed:8643607). Interacts with the retinoid acid receptor RXR-gamma (RXRG) in a ligand-dependent manner (PubMed:10347167). Interacts (via N-terminus) with MCM7 (PubMed:24910095). Interacts with MCM3 (PubMed:24910095). Interacts with CDC45 (PubMed:24910095).</text>
</comment>
<comment type="subunit">
    <molecule>Isoform Alpha</molecule>
    <text evidence="8">Interacts (via C-terminus) with ferritin heavy chain FTH1.</text>
</comment>
<comment type="subunit">
    <molecule>Isoform Beta</molecule>
    <text evidence="8">Does not interact with ferritin heavy chain FTH1.</text>
</comment>
<comment type="interaction">
    <interactant intactId="EBI-954501">
        <id>Q13772</id>
    </interactant>
    <interactant intactId="EBI-713279">
        <id>P02792</id>
        <label>FTL</label>
    </interactant>
    <organismsDiffer>false</organismsDiffer>
    <experiments>3</experiments>
</comment>
<comment type="interaction">
    <interactant intactId="EBI-12054609">
        <id>Q13772-3</id>
    </interactant>
    <interactant intactId="EBI-702390">
        <id>Q9UBB4</id>
        <label>ATXN10</label>
    </interactant>
    <organismsDiffer>false</organismsDiffer>
    <experiments>3</experiments>
</comment>
<comment type="interaction">
    <interactant intactId="EBI-12054609">
        <id>Q13772-3</id>
    </interactant>
    <interactant intactId="EBI-1055254">
        <id>Q8WXH2</id>
        <label>JPH3</label>
    </interactant>
    <organismsDiffer>false</organismsDiffer>
    <experiments>3</experiments>
</comment>
<comment type="interaction">
    <interactant intactId="EBI-12054609">
        <id>Q13772-3</id>
    </interactant>
    <interactant intactId="EBI-10172526">
        <id>Q9UJV3-2</id>
        <label>MID2</label>
    </interactant>
    <organismsDiffer>false</organismsDiffer>
    <experiments>3</experiments>
</comment>
<comment type="subcellular location">
    <subcellularLocation>
        <location evidence="7">Cytoplasmic vesicle</location>
        <location evidence="7">Autophagosome</location>
    </subcellularLocation>
    <subcellularLocation>
        <location evidence="7">Autolysosome</location>
    </subcellularLocation>
    <subcellularLocation>
        <location evidence="6">Nucleus</location>
    </subcellularLocation>
    <subcellularLocation>
        <location evidence="6">Chromosome</location>
    </subcellularLocation>
</comment>
<comment type="alternative products">
    <event type="alternative splicing"/>
    <isoform>
        <id>Q13772-1</id>
        <name>Alpha</name>
        <sequence type="displayed"/>
    </isoform>
    <isoform>
        <id>Q13772-2</id>
        <name>Beta</name>
        <sequence type="described" ref="VSP_003409"/>
    </isoform>
    <isoform>
        <id>Q13772-3</id>
        <name>3</name>
        <sequence type="described" ref="VSP_046348"/>
    </isoform>
    <isoform>
        <id>Q13772-4</id>
        <name>4</name>
        <sequence type="described" ref="VSP_046348 VSP_046349"/>
    </isoform>
    <text>Additional isoforms seem to exist.</text>
</comment>
<comment type="tissue specificity">
    <text>Widely expressed. Also detected in adipose tissues and in different cell lines. Isoform Beta is only expressed in testis.</text>
</comment>
<comment type="induction">
    <text evidence="7">Down-regulated by nutrient deprivation (at protein level).</text>
</comment>
<comment type="PTM">
    <text evidence="7">NCOA4 levels may be regulated via HERC2-mediated ubiquitination leading to proteosomal degradation; HERC2 association is dependent on NCOA4 iron occupancy.</text>
</comment>
<comment type="disease">
    <text evidence="9 10">A chromosomal aberration involving NCOA4 is found in papillary thyroid carcinomas (PTCs). Inversion inv(10)(q11.2;q11.2) generates the RET/NCOA4 (PTC3) oncogene.</text>
</comment>
<comment type="online information" name="Atlas of Genetics and Cytogenetics in Oncology and Haematology">
    <link uri="https://atlasgeneticsoncology.org/gene/218/NCOA4"/>
</comment>